<feature type="chain" id="PRO_0000255862" description="Pyridoxine/pyridoxamine 5'-phosphate oxidase">
    <location>
        <begin position="1"/>
        <end position="215"/>
    </location>
</feature>
<feature type="binding site" evidence="1">
    <location>
        <begin position="9"/>
        <end position="12"/>
    </location>
    <ligand>
        <name>substrate</name>
    </ligand>
</feature>
<feature type="binding site" evidence="1">
    <location>
        <begin position="62"/>
        <end position="67"/>
    </location>
    <ligand>
        <name>FMN</name>
        <dbReference type="ChEBI" id="CHEBI:58210"/>
    </ligand>
</feature>
<feature type="binding site" evidence="1">
    <location>
        <position position="67"/>
    </location>
    <ligand>
        <name>substrate</name>
    </ligand>
</feature>
<feature type="binding site" evidence="1">
    <location>
        <begin position="77"/>
        <end position="78"/>
    </location>
    <ligand>
        <name>FMN</name>
        <dbReference type="ChEBI" id="CHEBI:58210"/>
    </ligand>
</feature>
<feature type="binding site" evidence="1">
    <location>
        <position position="84"/>
    </location>
    <ligand>
        <name>FMN</name>
        <dbReference type="ChEBI" id="CHEBI:58210"/>
    </ligand>
</feature>
<feature type="binding site" evidence="1">
    <location>
        <position position="106"/>
    </location>
    <ligand>
        <name>FMN</name>
        <dbReference type="ChEBI" id="CHEBI:58210"/>
    </ligand>
</feature>
<feature type="binding site" evidence="1">
    <location>
        <position position="124"/>
    </location>
    <ligand>
        <name>substrate</name>
    </ligand>
</feature>
<feature type="binding site" evidence="1">
    <location>
        <position position="128"/>
    </location>
    <ligand>
        <name>substrate</name>
    </ligand>
</feature>
<feature type="binding site" evidence="1">
    <location>
        <position position="132"/>
    </location>
    <ligand>
        <name>substrate</name>
    </ligand>
</feature>
<feature type="binding site" evidence="1">
    <location>
        <begin position="141"/>
        <end position="142"/>
    </location>
    <ligand>
        <name>FMN</name>
        <dbReference type="ChEBI" id="CHEBI:58210"/>
    </ligand>
</feature>
<feature type="binding site" evidence="1">
    <location>
        <position position="186"/>
    </location>
    <ligand>
        <name>FMN</name>
        <dbReference type="ChEBI" id="CHEBI:58210"/>
    </ligand>
</feature>
<feature type="binding site" evidence="1">
    <location>
        <begin position="192"/>
        <end position="194"/>
    </location>
    <ligand>
        <name>substrate</name>
    </ligand>
</feature>
<feature type="binding site" evidence="1">
    <location>
        <position position="196"/>
    </location>
    <ligand>
        <name>FMN</name>
        <dbReference type="ChEBI" id="CHEBI:58210"/>
    </ligand>
</feature>
<evidence type="ECO:0000255" key="1">
    <source>
        <dbReference type="HAMAP-Rule" id="MF_01629"/>
    </source>
</evidence>
<sequence>MNYDIADLRRDYAGETLSVESAPASPLDLFQTWFAAAREHETQDANAMTLATVDSQGLPHARVVLLKQLDDKGLVFFTNYQSHKGSELTNVPYAALVFWWPTLQRQIRIEGRVEKASAEVSDAYFANRPRDSQLGAWISQQSVEIPDRDWLEERKQRFEQVYGEQTVERPPHWGGYRVLPFLLEFWQGQPNRLHDRIRYRYHEQDAAWSKTRLAP</sequence>
<comment type="function">
    <text evidence="1">Catalyzes the oxidation of either pyridoxine 5'-phosphate (PNP) or pyridoxamine 5'-phosphate (PMP) into pyridoxal 5'-phosphate (PLP).</text>
</comment>
<comment type="catalytic activity">
    <reaction evidence="1">
        <text>pyridoxamine 5'-phosphate + O2 + H2O = pyridoxal 5'-phosphate + H2O2 + NH4(+)</text>
        <dbReference type="Rhea" id="RHEA:15817"/>
        <dbReference type="ChEBI" id="CHEBI:15377"/>
        <dbReference type="ChEBI" id="CHEBI:15379"/>
        <dbReference type="ChEBI" id="CHEBI:16240"/>
        <dbReference type="ChEBI" id="CHEBI:28938"/>
        <dbReference type="ChEBI" id="CHEBI:58451"/>
        <dbReference type="ChEBI" id="CHEBI:597326"/>
        <dbReference type="EC" id="1.4.3.5"/>
    </reaction>
</comment>
<comment type="catalytic activity">
    <reaction evidence="1">
        <text>pyridoxine 5'-phosphate + O2 = pyridoxal 5'-phosphate + H2O2</text>
        <dbReference type="Rhea" id="RHEA:15149"/>
        <dbReference type="ChEBI" id="CHEBI:15379"/>
        <dbReference type="ChEBI" id="CHEBI:16240"/>
        <dbReference type="ChEBI" id="CHEBI:58589"/>
        <dbReference type="ChEBI" id="CHEBI:597326"/>
        <dbReference type="EC" id="1.4.3.5"/>
    </reaction>
</comment>
<comment type="cofactor">
    <cofactor evidence="1">
        <name>FMN</name>
        <dbReference type="ChEBI" id="CHEBI:58210"/>
    </cofactor>
    <text evidence="1">Binds 1 FMN per subunit.</text>
</comment>
<comment type="pathway">
    <text evidence="1">Cofactor metabolism; pyridoxal 5'-phosphate salvage; pyridoxal 5'-phosphate from pyridoxamine 5'-phosphate: step 1/1.</text>
</comment>
<comment type="pathway">
    <text evidence="1">Cofactor metabolism; pyridoxal 5'-phosphate salvage; pyridoxal 5'-phosphate from pyridoxine 5'-phosphate: step 1/1.</text>
</comment>
<comment type="subunit">
    <text evidence="1">Homodimer.</text>
</comment>
<comment type="similarity">
    <text evidence="1">Belongs to the pyridoxamine 5'-phosphate oxidase family.</text>
</comment>
<protein>
    <recommendedName>
        <fullName evidence="1">Pyridoxine/pyridoxamine 5'-phosphate oxidase</fullName>
        <ecNumber evidence="1">1.4.3.5</ecNumber>
    </recommendedName>
    <alternativeName>
        <fullName evidence="1">PNP/PMP oxidase</fullName>
        <shortName evidence="1">PNPOx</shortName>
    </alternativeName>
    <alternativeName>
        <fullName evidence="1">Pyridoxal 5'-phosphate synthase</fullName>
    </alternativeName>
</protein>
<organism>
    <name type="scientific">Chromohalobacter salexigens (strain ATCC BAA-138 / DSM 3043 / CIP 106854 / NCIMB 13768 / 1H11)</name>
    <dbReference type="NCBI Taxonomy" id="290398"/>
    <lineage>
        <taxon>Bacteria</taxon>
        <taxon>Pseudomonadati</taxon>
        <taxon>Pseudomonadota</taxon>
        <taxon>Gammaproteobacteria</taxon>
        <taxon>Oceanospirillales</taxon>
        <taxon>Halomonadaceae</taxon>
        <taxon>Chromohalobacter</taxon>
    </lineage>
</organism>
<reference key="1">
    <citation type="journal article" date="2011" name="Stand. Genomic Sci.">
        <title>Complete genome sequence of the halophilic and highly halotolerant Chromohalobacter salexigens type strain (1H11(T)).</title>
        <authorList>
            <person name="Copeland A."/>
            <person name="O'Connor K."/>
            <person name="Lucas S."/>
            <person name="Lapidus A."/>
            <person name="Berry K.W."/>
            <person name="Detter J.C."/>
            <person name="Del Rio T.G."/>
            <person name="Hammon N."/>
            <person name="Dalin E."/>
            <person name="Tice H."/>
            <person name="Pitluck S."/>
            <person name="Bruce D."/>
            <person name="Goodwin L."/>
            <person name="Han C."/>
            <person name="Tapia R."/>
            <person name="Saunders E."/>
            <person name="Schmutz J."/>
            <person name="Brettin T."/>
            <person name="Larimer F."/>
            <person name="Land M."/>
            <person name="Hauser L."/>
            <person name="Vargas C."/>
            <person name="Nieto J.J."/>
            <person name="Kyrpides N.C."/>
            <person name="Ivanova N."/>
            <person name="Goker M."/>
            <person name="Klenk H.P."/>
            <person name="Csonka L.N."/>
            <person name="Woyke T."/>
        </authorList>
    </citation>
    <scope>NUCLEOTIDE SEQUENCE [LARGE SCALE GENOMIC DNA]</scope>
    <source>
        <strain>ATCC BAA-138 / DSM 3043 / CIP 106854 / NCIMB 13768 / 1H11</strain>
    </source>
</reference>
<name>PDXH_CHRSD</name>
<proteinExistence type="inferred from homology"/>
<gene>
    <name evidence="1" type="primary">pdxH</name>
    <name type="ordered locus">Csal_1900</name>
</gene>
<keyword id="KW-0285">Flavoprotein</keyword>
<keyword id="KW-0288">FMN</keyword>
<keyword id="KW-0560">Oxidoreductase</keyword>
<keyword id="KW-0664">Pyridoxine biosynthesis</keyword>
<keyword id="KW-1185">Reference proteome</keyword>
<dbReference type="EC" id="1.4.3.5" evidence="1"/>
<dbReference type="EMBL" id="CP000285">
    <property type="protein sequence ID" value="ABE59252.1"/>
    <property type="molecule type" value="Genomic_DNA"/>
</dbReference>
<dbReference type="RefSeq" id="WP_011507198.1">
    <property type="nucleotide sequence ID" value="NC_007963.1"/>
</dbReference>
<dbReference type="SMR" id="Q1QWA6"/>
<dbReference type="STRING" id="290398.Csal_1900"/>
<dbReference type="GeneID" id="95334616"/>
<dbReference type="KEGG" id="csa:Csal_1900"/>
<dbReference type="eggNOG" id="COG0259">
    <property type="taxonomic scope" value="Bacteria"/>
</dbReference>
<dbReference type="HOGENOM" id="CLU_032263_2_3_6"/>
<dbReference type="OrthoDB" id="9780392at2"/>
<dbReference type="UniPathway" id="UPA01068">
    <property type="reaction ID" value="UER00304"/>
</dbReference>
<dbReference type="UniPathway" id="UPA01068">
    <property type="reaction ID" value="UER00305"/>
</dbReference>
<dbReference type="Proteomes" id="UP000000239">
    <property type="component" value="Chromosome"/>
</dbReference>
<dbReference type="GO" id="GO:0010181">
    <property type="term" value="F:FMN binding"/>
    <property type="evidence" value="ECO:0007669"/>
    <property type="project" value="UniProtKB-UniRule"/>
</dbReference>
<dbReference type="GO" id="GO:0004733">
    <property type="term" value="F:pyridoxamine phosphate oxidase activity"/>
    <property type="evidence" value="ECO:0007669"/>
    <property type="project" value="UniProtKB-UniRule"/>
</dbReference>
<dbReference type="GO" id="GO:0008615">
    <property type="term" value="P:pyridoxine biosynthetic process"/>
    <property type="evidence" value="ECO:0007669"/>
    <property type="project" value="UniProtKB-KW"/>
</dbReference>
<dbReference type="FunFam" id="2.30.110.10:FF:000020">
    <property type="entry name" value="PNPO isoform 11"/>
    <property type="match status" value="1"/>
</dbReference>
<dbReference type="Gene3D" id="2.30.110.10">
    <property type="entry name" value="Electron Transport, Fmn-binding Protein, Chain A"/>
    <property type="match status" value="1"/>
</dbReference>
<dbReference type="HAMAP" id="MF_01629">
    <property type="entry name" value="PdxH"/>
    <property type="match status" value="1"/>
</dbReference>
<dbReference type="InterPro" id="IPR000659">
    <property type="entry name" value="Pyridox_Oxase"/>
</dbReference>
<dbReference type="InterPro" id="IPR019740">
    <property type="entry name" value="Pyridox_Oxase_CS"/>
</dbReference>
<dbReference type="InterPro" id="IPR011576">
    <property type="entry name" value="Pyridox_Oxase_N"/>
</dbReference>
<dbReference type="InterPro" id="IPR019576">
    <property type="entry name" value="Pyridoxamine_oxidase_dimer_C"/>
</dbReference>
<dbReference type="InterPro" id="IPR012349">
    <property type="entry name" value="Split_barrel_FMN-bd"/>
</dbReference>
<dbReference type="NCBIfam" id="TIGR00558">
    <property type="entry name" value="pdxH"/>
    <property type="match status" value="1"/>
</dbReference>
<dbReference type="NCBIfam" id="NF004231">
    <property type="entry name" value="PRK05679.1"/>
    <property type="match status" value="1"/>
</dbReference>
<dbReference type="PANTHER" id="PTHR10851:SF0">
    <property type="entry name" value="PYRIDOXINE-5'-PHOSPHATE OXIDASE"/>
    <property type="match status" value="1"/>
</dbReference>
<dbReference type="PANTHER" id="PTHR10851">
    <property type="entry name" value="PYRIDOXINE-5-PHOSPHATE OXIDASE"/>
    <property type="match status" value="1"/>
</dbReference>
<dbReference type="Pfam" id="PF10590">
    <property type="entry name" value="PNP_phzG_C"/>
    <property type="match status" value="1"/>
</dbReference>
<dbReference type="Pfam" id="PF01243">
    <property type="entry name" value="PNPOx_N"/>
    <property type="match status" value="1"/>
</dbReference>
<dbReference type="PIRSF" id="PIRSF000190">
    <property type="entry name" value="Pyd_amn-ph_oxd"/>
    <property type="match status" value="1"/>
</dbReference>
<dbReference type="SUPFAM" id="SSF50475">
    <property type="entry name" value="FMN-binding split barrel"/>
    <property type="match status" value="1"/>
</dbReference>
<dbReference type="PROSITE" id="PS01064">
    <property type="entry name" value="PYRIDOX_OXIDASE"/>
    <property type="match status" value="1"/>
</dbReference>
<accession>Q1QWA6</accession>